<feature type="chain" id="PRO_0000383118" description="Spartin">
    <location>
        <begin position="1"/>
        <end position="668"/>
    </location>
</feature>
<feature type="domain" description="MIT">
    <location>
        <begin position="16"/>
        <end position="94"/>
    </location>
</feature>
<feature type="domain" description="Senescence" evidence="3">
    <location>
        <begin position="427"/>
        <end position="611"/>
    </location>
</feature>
<feature type="region of interest" description="Disordered" evidence="4">
    <location>
        <begin position="110"/>
        <end position="176"/>
    </location>
</feature>
<feature type="region of interest" description="Ubiquitin-binding region (UBR) domain" evidence="1">
    <location>
        <begin position="190"/>
        <end position="380"/>
    </location>
</feature>
<feature type="region of interest" description="Disordered" evidence="4">
    <location>
        <begin position="348"/>
        <end position="396"/>
    </location>
</feature>
<feature type="region of interest" description="Required for localization to lipid droplets" evidence="1">
    <location>
        <begin position="431"/>
        <end position="503"/>
    </location>
</feature>
<feature type="region of interest" description="Disordered" evidence="4">
    <location>
        <begin position="631"/>
        <end position="668"/>
    </location>
</feature>
<feature type="short sequence motif" description="LC3-interacting region (LIR); mediates interaction with MAP1LC3A AND MAP1LC3C" evidence="1">
    <location>
        <begin position="193"/>
        <end position="200"/>
    </location>
</feature>
<feature type="compositionally biased region" description="Basic and acidic residues" evidence="4">
    <location>
        <begin position="118"/>
        <end position="127"/>
    </location>
</feature>
<feature type="compositionally biased region" description="Low complexity" evidence="4">
    <location>
        <begin position="128"/>
        <end position="162"/>
    </location>
</feature>
<feature type="compositionally biased region" description="Basic and acidic residues" evidence="4">
    <location>
        <begin position="648"/>
        <end position="668"/>
    </location>
</feature>
<feature type="modified residue" description="N-acetylmethionine" evidence="1">
    <location>
        <position position="1"/>
    </location>
</feature>
<feature type="modified residue" description="Phosphoserine" evidence="2">
    <location>
        <position position="126"/>
    </location>
</feature>
<feature type="modified residue" description="Phosphoserine" evidence="1">
    <location>
        <position position="470"/>
    </location>
</feature>
<feature type="cross-link" description="Glycyl lysine isopeptide (Lys-Gly) (interchain with G-Cter in ubiquitin)" evidence="1">
    <location>
        <position position="362"/>
    </location>
</feature>
<sequence>MEQGPQDGEPIEIKIIKEAYKKAFVFVNKGLNTDELGQKEEAKNYYKQGIGHLLRGISISSTDPEYTGPEWESARQMQQKMKETLQNVRTRLEILEKGLATSLRNDLQEVPKLYPEFPPKDMSEKSPEPQSLSSLPQHSEVNGSTSTASAESSSTPTTLSLPCQSHPSEAPPAYTPQAAEGHYTVSYGTESGEFSSVGENFYRNHSQPPPLETLGLDADELILIPNGVQIFFVNPAGEVSAPSYPGYLRIVRFLDNSLDTFLNRPPGFLQVCDWLYPLVPDRSPVLKCTVGAYMFPDTMLQASGCFVGVVLSSELPEDDRELFEDLLRQMSDLRLQTNWDRAEGENEFQIPGISGSASDQLKEASGTDVRQLDPSSKDVRQKGKRGKKTKGTSSEEVNLSHIVPCEPVSEEKAKELPEWSEKVAHNILSGASWVSWGLVKGAEFTGKAIQKGASKLRERIQPEEKPVEVSPAVTKGLYMAKQATGGAAKVSQFLVDGVCTVANCVGKELAPHVKKHGSKLVPESLKKDRNGKSTLDGAMVVAASSVQGFSTVWQGLECAAKCIVNNVSAETVQTVRYKYGHTAGEATHNAVDSAINVGVTAYNIDNIGIKAMVKKTAKQTGHTLLEDYKIIDNSKGENPGGGASANLKGEKDEQKEGPEKNGAKKKDK</sequence>
<keyword id="KW-0007">Acetylation</keyword>
<keyword id="KW-0963">Cytoplasm</keyword>
<keyword id="KW-1017">Isopeptide bond</keyword>
<keyword id="KW-0442">Lipid degradation</keyword>
<keyword id="KW-0551">Lipid droplet</keyword>
<keyword id="KW-0443">Lipid metabolism</keyword>
<keyword id="KW-0445">Lipid transport</keyword>
<keyword id="KW-0446">Lipid-binding</keyword>
<keyword id="KW-0597">Phosphoprotein</keyword>
<keyword id="KW-1185">Reference proteome</keyword>
<keyword id="KW-0813">Transport</keyword>
<keyword id="KW-0832">Ubl conjugation</keyword>
<protein>
    <recommendedName>
        <fullName evidence="5">Spartin</fullName>
    </recommendedName>
</protein>
<name>SPART_BOVIN</name>
<evidence type="ECO:0000250" key="1">
    <source>
        <dbReference type="UniProtKB" id="Q8N0X7"/>
    </source>
</evidence>
<evidence type="ECO:0000250" key="2">
    <source>
        <dbReference type="UniProtKB" id="Q8R1X6"/>
    </source>
</evidence>
<evidence type="ECO:0000255" key="3"/>
<evidence type="ECO:0000256" key="4">
    <source>
        <dbReference type="SAM" id="MobiDB-lite"/>
    </source>
</evidence>
<evidence type="ECO:0000305" key="5"/>
<proteinExistence type="evidence at transcript level"/>
<dbReference type="EMBL" id="BC126710">
    <property type="protein sequence ID" value="AAI26711.1"/>
    <property type="molecule type" value="mRNA"/>
</dbReference>
<dbReference type="RefSeq" id="NP_001071464.1">
    <property type="nucleotide sequence ID" value="NM_001077996.1"/>
</dbReference>
<dbReference type="RefSeq" id="XP_059748050.1">
    <property type="nucleotide sequence ID" value="XM_059892067.1"/>
</dbReference>
<dbReference type="SMR" id="A0JNJ3"/>
<dbReference type="BioGRID" id="190617">
    <property type="interactions" value="1"/>
</dbReference>
<dbReference type="FunCoup" id="A0JNJ3">
    <property type="interactions" value="1240"/>
</dbReference>
<dbReference type="STRING" id="9913.ENSBTAP00000010577"/>
<dbReference type="PaxDb" id="9913-ENSBTAP00000010577"/>
<dbReference type="Ensembl" id="ENSBTAT00000010577.7">
    <property type="protein sequence ID" value="ENSBTAP00000010577.5"/>
    <property type="gene ID" value="ENSBTAG00000008040.7"/>
</dbReference>
<dbReference type="GeneID" id="534027"/>
<dbReference type="KEGG" id="bta:534027"/>
<dbReference type="CTD" id="23111"/>
<dbReference type="VEuPathDB" id="HostDB:ENSBTAG00000008040"/>
<dbReference type="VGNC" id="VGNC:35173">
    <property type="gene designation" value="SPART"/>
</dbReference>
<dbReference type="eggNOG" id="KOG2709">
    <property type="taxonomic scope" value="Eukaryota"/>
</dbReference>
<dbReference type="GeneTree" id="ENSGT00390000012235"/>
<dbReference type="HOGENOM" id="CLU_019310_0_0_1"/>
<dbReference type="InParanoid" id="A0JNJ3"/>
<dbReference type="OMA" id="WQGMECA"/>
<dbReference type="OrthoDB" id="20821at2759"/>
<dbReference type="TreeFam" id="TF105252"/>
<dbReference type="Proteomes" id="UP000009136">
    <property type="component" value="Chromosome 12"/>
</dbReference>
<dbReference type="Bgee" id="ENSBTAG00000008040">
    <property type="expression patterns" value="Expressed in adult mammalian kidney and 105 other cell types or tissues"/>
</dbReference>
<dbReference type="GO" id="GO:0005737">
    <property type="term" value="C:cytoplasm"/>
    <property type="evidence" value="ECO:0007669"/>
    <property type="project" value="UniProtKB-SubCell"/>
</dbReference>
<dbReference type="GO" id="GO:0005811">
    <property type="term" value="C:lipid droplet"/>
    <property type="evidence" value="ECO:0000250"/>
    <property type="project" value="UniProtKB"/>
</dbReference>
<dbReference type="GO" id="GO:0030496">
    <property type="term" value="C:midbody"/>
    <property type="evidence" value="ECO:0007669"/>
    <property type="project" value="UniProtKB-SubCell"/>
</dbReference>
<dbReference type="GO" id="GO:0005886">
    <property type="term" value="C:plasma membrane"/>
    <property type="evidence" value="ECO:0000318"/>
    <property type="project" value="GO_Central"/>
</dbReference>
<dbReference type="GO" id="GO:0008289">
    <property type="term" value="F:lipid binding"/>
    <property type="evidence" value="ECO:0000250"/>
    <property type="project" value="UniProtKB"/>
</dbReference>
<dbReference type="GO" id="GO:0051301">
    <property type="term" value="P:cell division"/>
    <property type="evidence" value="ECO:0000318"/>
    <property type="project" value="GO_Central"/>
</dbReference>
<dbReference type="GO" id="GO:0016042">
    <property type="term" value="P:lipid catabolic process"/>
    <property type="evidence" value="ECO:0007669"/>
    <property type="project" value="UniProtKB-KW"/>
</dbReference>
<dbReference type="GO" id="GO:0006869">
    <property type="term" value="P:lipid transport"/>
    <property type="evidence" value="ECO:0000250"/>
    <property type="project" value="UniProtKB"/>
</dbReference>
<dbReference type="GO" id="GO:0061724">
    <property type="term" value="P:lipophagy"/>
    <property type="evidence" value="ECO:0000250"/>
    <property type="project" value="UniProtKB"/>
</dbReference>
<dbReference type="GO" id="GO:0030514">
    <property type="term" value="P:negative regulation of BMP signaling pathway"/>
    <property type="evidence" value="ECO:0000318"/>
    <property type="project" value="GO_Central"/>
</dbReference>
<dbReference type="CDD" id="cd02679">
    <property type="entry name" value="MIT_spastin"/>
    <property type="match status" value="1"/>
</dbReference>
<dbReference type="FunFam" id="1.20.58.80:FF:000009">
    <property type="entry name" value="spartin isoform X1"/>
    <property type="match status" value="1"/>
</dbReference>
<dbReference type="Gene3D" id="1.20.58.80">
    <property type="entry name" value="Phosphotransferase system, lactose/cellobiose-type IIA subunit"/>
    <property type="match status" value="1"/>
</dbReference>
<dbReference type="InterPro" id="IPR007330">
    <property type="entry name" value="MIT_dom"/>
</dbReference>
<dbReference type="InterPro" id="IPR036181">
    <property type="entry name" value="MIT_dom_sf"/>
</dbReference>
<dbReference type="InterPro" id="IPR009686">
    <property type="entry name" value="Senescence/spartin_C"/>
</dbReference>
<dbReference type="InterPro" id="IPR045036">
    <property type="entry name" value="Spartin-like"/>
</dbReference>
<dbReference type="PANTHER" id="PTHR21068">
    <property type="entry name" value="SPARTIN"/>
    <property type="match status" value="1"/>
</dbReference>
<dbReference type="PANTHER" id="PTHR21068:SF43">
    <property type="entry name" value="SPARTIN"/>
    <property type="match status" value="1"/>
</dbReference>
<dbReference type="Pfam" id="PF06911">
    <property type="entry name" value="Senescence"/>
    <property type="match status" value="1"/>
</dbReference>
<dbReference type="SMART" id="SM00745">
    <property type="entry name" value="MIT"/>
    <property type="match status" value="1"/>
</dbReference>
<dbReference type="SUPFAM" id="SSF116846">
    <property type="entry name" value="MIT domain"/>
    <property type="match status" value="1"/>
</dbReference>
<accession>A0JNJ3</accession>
<gene>
    <name evidence="1" type="primary">SPART</name>
</gene>
<organism>
    <name type="scientific">Bos taurus</name>
    <name type="common">Bovine</name>
    <dbReference type="NCBI Taxonomy" id="9913"/>
    <lineage>
        <taxon>Eukaryota</taxon>
        <taxon>Metazoa</taxon>
        <taxon>Chordata</taxon>
        <taxon>Craniata</taxon>
        <taxon>Vertebrata</taxon>
        <taxon>Euteleostomi</taxon>
        <taxon>Mammalia</taxon>
        <taxon>Eutheria</taxon>
        <taxon>Laurasiatheria</taxon>
        <taxon>Artiodactyla</taxon>
        <taxon>Ruminantia</taxon>
        <taxon>Pecora</taxon>
        <taxon>Bovidae</taxon>
        <taxon>Bovinae</taxon>
        <taxon>Bos</taxon>
    </lineage>
</organism>
<reference key="1">
    <citation type="submission" date="2006-10" db="EMBL/GenBank/DDBJ databases">
        <authorList>
            <consortium name="NIH - Mammalian Gene Collection (MGC) project"/>
        </authorList>
    </citation>
    <scope>NUCLEOTIDE SEQUENCE [LARGE SCALE MRNA]</scope>
    <source>
        <strain>Hereford</strain>
        <tissue>Hypothalamus</tissue>
    </source>
</reference>
<comment type="function">
    <text evidence="1">Lipophagy receptor that plays an important role in lipid droplet (LD) turnover in motor neurons. Localizes to LDs and interacts with components of the autophagy machinery, such as MAP1LC3A/C proteins to deliver LDs to autophagosomes for degradation via lipophagy. Lipid transfer protein required for lipid droplet degradation, including by lipophagy. Can bind and transfer all lipid species found in lipid droplets, from phospholipids to triglycerides and sterol esters but the direction of lipid transfer by spartin and its cargos are unknown. May be implicated in endosomal trafficking, or microtubule dynamics, or both. Participates in cytokinesis.</text>
</comment>
<comment type="subunit">
    <text evidence="1">Interacts with ITCH and WWP1. Interacts (via MIT domain) with IST1; leading to the recruitment of SPART to midbodies. Interacts with MAP1LC3A and MAP1LC3C.</text>
</comment>
<comment type="subcellular location">
    <subcellularLocation>
        <location evidence="1">Cytoplasm</location>
    </subcellularLocation>
    <subcellularLocation>
        <location evidence="1">Midbody</location>
    </subcellularLocation>
    <subcellularLocation>
        <location evidence="1">Lipid droplet</location>
    </subcellularLocation>
    <text evidence="1">Transiently associated with endosomes. Colocalized with IST1 to the ends of Flemming bodies during cytokinesis.</text>
</comment>
<comment type="domain">
    <text evidence="1">The senescence domain is required and sufficient for lipid transfer.</text>
</comment>
<comment type="PTM">
    <text evidence="1">Ubiquitinated; ubiquitination does not require ITCH and WWP1.</text>
</comment>